<gene>
    <name evidence="1" type="primary">pnp</name>
    <name type="ordered locus">Cphamn1_0552</name>
</gene>
<name>PNP_CHLPB</name>
<feature type="chain" id="PRO_1000147901" description="Polyribonucleotide nucleotidyltransferase">
    <location>
        <begin position="1"/>
        <end position="734"/>
    </location>
</feature>
<feature type="domain" description="KH" evidence="1">
    <location>
        <begin position="570"/>
        <end position="629"/>
    </location>
</feature>
<feature type="domain" description="S1 motif" evidence="1">
    <location>
        <begin position="639"/>
        <end position="713"/>
    </location>
</feature>
<feature type="binding site" evidence="1">
    <location>
        <position position="503"/>
    </location>
    <ligand>
        <name>Mg(2+)</name>
        <dbReference type="ChEBI" id="CHEBI:18420"/>
    </ligand>
</feature>
<feature type="binding site" evidence="1">
    <location>
        <position position="509"/>
    </location>
    <ligand>
        <name>Mg(2+)</name>
        <dbReference type="ChEBI" id="CHEBI:18420"/>
    </ligand>
</feature>
<keyword id="KW-0963">Cytoplasm</keyword>
<keyword id="KW-0460">Magnesium</keyword>
<keyword id="KW-0479">Metal-binding</keyword>
<keyword id="KW-0548">Nucleotidyltransferase</keyword>
<keyword id="KW-0694">RNA-binding</keyword>
<keyword id="KW-0808">Transferase</keyword>
<comment type="function">
    <text evidence="1">Involved in mRNA degradation. Catalyzes the phosphorolysis of single-stranded polyribonucleotides processively in the 3'- to 5'-direction.</text>
</comment>
<comment type="catalytic activity">
    <reaction evidence="1">
        <text>RNA(n+1) + phosphate = RNA(n) + a ribonucleoside 5'-diphosphate</text>
        <dbReference type="Rhea" id="RHEA:22096"/>
        <dbReference type="Rhea" id="RHEA-COMP:14527"/>
        <dbReference type="Rhea" id="RHEA-COMP:17342"/>
        <dbReference type="ChEBI" id="CHEBI:43474"/>
        <dbReference type="ChEBI" id="CHEBI:57930"/>
        <dbReference type="ChEBI" id="CHEBI:140395"/>
        <dbReference type="EC" id="2.7.7.8"/>
    </reaction>
</comment>
<comment type="cofactor">
    <cofactor evidence="1">
        <name>Mg(2+)</name>
        <dbReference type="ChEBI" id="CHEBI:18420"/>
    </cofactor>
</comment>
<comment type="subcellular location">
    <subcellularLocation>
        <location evidence="1">Cytoplasm</location>
    </subcellularLocation>
</comment>
<comment type="similarity">
    <text evidence="1">Belongs to the polyribonucleotide nucleotidyltransferase family.</text>
</comment>
<organism>
    <name type="scientific">Chlorobium phaeobacteroides (strain BS1)</name>
    <dbReference type="NCBI Taxonomy" id="331678"/>
    <lineage>
        <taxon>Bacteria</taxon>
        <taxon>Pseudomonadati</taxon>
        <taxon>Chlorobiota</taxon>
        <taxon>Chlorobiia</taxon>
        <taxon>Chlorobiales</taxon>
        <taxon>Chlorobiaceae</taxon>
        <taxon>Chlorobium/Pelodictyon group</taxon>
        <taxon>Chlorobium</taxon>
    </lineage>
</organism>
<sequence>MFIRKEIDLGDGKVITIETGKMAKQADGATIVRMGDTMVIATVVSSRTPPSPNQDFFPMQVEYREKYYAAGKFPGGFIKRESRPSEKEILSARLIDRALRPLFPNGYYQDTQIIISVISSDQLNDADVLGGIAASAAIMVSDIPFANSMSEVRVGRINGEFVINPTINELAQSDIDISIGGTNDTICMLEGEMNEISEAEMLEAIRFGHEAIKKICSLQDDIAAEVNKPKRSFLAIDAPDELKESIKEACEAPLKELAYMPLAKEERAEKTTAVYKSITEQILGRYKNEITAEDIAADPSKALYLNEQIISGHIHAIEKQVMRHMILDDAKRLDGRKLEEVRPISIELGLIPRAHGSALFTRGETQALVVLTLGTKKDAQMIDTLLDDTEKRFMLHYNFPPFSVGETGRVGGVGRREIGHGNLAERAVKKVVPSESEFPYTIRLVSEILESNGSSSMASVCGATLAAMDGGVPLTKPVSGIAMGLIKEDDNYAVLSDILGNEDHLGDMDFKVAGTRDGITACQMDIKIDGLDYHILEKALEQSKNGRLHILDKMTESIADPRGEIGQYAPKLSTIQVPVDAIGMIIGKGGETIRSITEETGAQINVDDDGTVTISSPNGESAAAAIETIKTLISKPEVGTIYMGKVKDIREDLGAFVEILPRTDGLVHISEIARERVNKVSDHLKQGDRVKVKLIDIRKDQRSGKIRYALSIKALLDMPAESANGPSAQEEQNQ</sequence>
<protein>
    <recommendedName>
        <fullName evidence="1">Polyribonucleotide nucleotidyltransferase</fullName>
        <ecNumber evidence="1">2.7.7.8</ecNumber>
    </recommendedName>
    <alternativeName>
        <fullName evidence="1">Polynucleotide phosphorylase</fullName>
        <shortName evidence="1">PNPase</shortName>
    </alternativeName>
</protein>
<accession>B3EMN6</accession>
<reference key="1">
    <citation type="submission" date="2008-06" db="EMBL/GenBank/DDBJ databases">
        <title>Complete sequence of Chlorobium phaeobacteroides BS1.</title>
        <authorList>
            <consortium name="US DOE Joint Genome Institute"/>
            <person name="Lucas S."/>
            <person name="Copeland A."/>
            <person name="Lapidus A."/>
            <person name="Glavina del Rio T."/>
            <person name="Dalin E."/>
            <person name="Tice H."/>
            <person name="Bruce D."/>
            <person name="Goodwin L."/>
            <person name="Pitluck S."/>
            <person name="Schmutz J."/>
            <person name="Larimer F."/>
            <person name="Land M."/>
            <person name="Hauser L."/>
            <person name="Kyrpides N."/>
            <person name="Ovchinnikova G."/>
            <person name="Li T."/>
            <person name="Liu Z."/>
            <person name="Zhao F."/>
            <person name="Overmann J."/>
            <person name="Bryant D.A."/>
            <person name="Richardson P."/>
        </authorList>
    </citation>
    <scope>NUCLEOTIDE SEQUENCE [LARGE SCALE GENOMIC DNA]</scope>
    <source>
        <strain>BS1</strain>
    </source>
</reference>
<proteinExistence type="inferred from homology"/>
<dbReference type="EC" id="2.7.7.8" evidence="1"/>
<dbReference type="EMBL" id="CP001101">
    <property type="protein sequence ID" value="ACE03514.1"/>
    <property type="molecule type" value="Genomic_DNA"/>
</dbReference>
<dbReference type="SMR" id="B3EMN6"/>
<dbReference type="STRING" id="331678.Cphamn1_0552"/>
<dbReference type="KEGG" id="cpb:Cphamn1_0552"/>
<dbReference type="eggNOG" id="COG1185">
    <property type="taxonomic scope" value="Bacteria"/>
</dbReference>
<dbReference type="HOGENOM" id="CLU_004217_2_2_10"/>
<dbReference type="OrthoDB" id="9804305at2"/>
<dbReference type="GO" id="GO:0005829">
    <property type="term" value="C:cytosol"/>
    <property type="evidence" value="ECO:0007669"/>
    <property type="project" value="TreeGrafter"/>
</dbReference>
<dbReference type="GO" id="GO:0000175">
    <property type="term" value="F:3'-5'-RNA exonuclease activity"/>
    <property type="evidence" value="ECO:0007669"/>
    <property type="project" value="TreeGrafter"/>
</dbReference>
<dbReference type="GO" id="GO:0000287">
    <property type="term" value="F:magnesium ion binding"/>
    <property type="evidence" value="ECO:0007669"/>
    <property type="project" value="UniProtKB-UniRule"/>
</dbReference>
<dbReference type="GO" id="GO:0004654">
    <property type="term" value="F:polyribonucleotide nucleotidyltransferase activity"/>
    <property type="evidence" value="ECO:0007669"/>
    <property type="project" value="UniProtKB-UniRule"/>
</dbReference>
<dbReference type="GO" id="GO:0003723">
    <property type="term" value="F:RNA binding"/>
    <property type="evidence" value="ECO:0007669"/>
    <property type="project" value="UniProtKB-UniRule"/>
</dbReference>
<dbReference type="GO" id="GO:0006402">
    <property type="term" value="P:mRNA catabolic process"/>
    <property type="evidence" value="ECO:0007669"/>
    <property type="project" value="UniProtKB-UniRule"/>
</dbReference>
<dbReference type="GO" id="GO:0006396">
    <property type="term" value="P:RNA processing"/>
    <property type="evidence" value="ECO:0007669"/>
    <property type="project" value="InterPro"/>
</dbReference>
<dbReference type="CDD" id="cd02393">
    <property type="entry name" value="KH-I_PNPase"/>
    <property type="match status" value="1"/>
</dbReference>
<dbReference type="CDD" id="cd11363">
    <property type="entry name" value="RNase_PH_PNPase_1"/>
    <property type="match status" value="1"/>
</dbReference>
<dbReference type="CDD" id="cd11364">
    <property type="entry name" value="RNase_PH_PNPase_2"/>
    <property type="match status" value="1"/>
</dbReference>
<dbReference type="CDD" id="cd04472">
    <property type="entry name" value="S1_PNPase"/>
    <property type="match status" value="1"/>
</dbReference>
<dbReference type="FunFam" id="3.30.1370.10:FF:000001">
    <property type="entry name" value="Polyribonucleotide nucleotidyltransferase"/>
    <property type="match status" value="1"/>
</dbReference>
<dbReference type="FunFam" id="3.30.230.70:FF:000001">
    <property type="entry name" value="Polyribonucleotide nucleotidyltransferase"/>
    <property type="match status" value="1"/>
</dbReference>
<dbReference type="FunFam" id="3.30.230.70:FF:000002">
    <property type="entry name" value="Polyribonucleotide nucleotidyltransferase"/>
    <property type="match status" value="1"/>
</dbReference>
<dbReference type="Gene3D" id="3.30.230.70">
    <property type="entry name" value="GHMP Kinase, N-terminal domain"/>
    <property type="match status" value="2"/>
</dbReference>
<dbReference type="Gene3D" id="3.30.1370.10">
    <property type="entry name" value="K Homology domain, type 1"/>
    <property type="match status" value="1"/>
</dbReference>
<dbReference type="Gene3D" id="2.40.50.140">
    <property type="entry name" value="Nucleic acid-binding proteins"/>
    <property type="match status" value="1"/>
</dbReference>
<dbReference type="HAMAP" id="MF_01595">
    <property type="entry name" value="PNPase"/>
    <property type="match status" value="1"/>
</dbReference>
<dbReference type="InterPro" id="IPR001247">
    <property type="entry name" value="ExoRNase_PH_dom1"/>
</dbReference>
<dbReference type="InterPro" id="IPR015847">
    <property type="entry name" value="ExoRNase_PH_dom2"/>
</dbReference>
<dbReference type="InterPro" id="IPR036345">
    <property type="entry name" value="ExoRNase_PH_dom2_sf"/>
</dbReference>
<dbReference type="InterPro" id="IPR004087">
    <property type="entry name" value="KH_dom"/>
</dbReference>
<dbReference type="InterPro" id="IPR004088">
    <property type="entry name" value="KH_dom_type_1"/>
</dbReference>
<dbReference type="InterPro" id="IPR036612">
    <property type="entry name" value="KH_dom_type_1_sf"/>
</dbReference>
<dbReference type="InterPro" id="IPR012340">
    <property type="entry name" value="NA-bd_OB-fold"/>
</dbReference>
<dbReference type="InterPro" id="IPR012162">
    <property type="entry name" value="PNPase"/>
</dbReference>
<dbReference type="InterPro" id="IPR027408">
    <property type="entry name" value="PNPase/RNase_PH_dom_sf"/>
</dbReference>
<dbReference type="InterPro" id="IPR015848">
    <property type="entry name" value="PNPase_PH_RNA-bd_bac/org-type"/>
</dbReference>
<dbReference type="InterPro" id="IPR020568">
    <property type="entry name" value="Ribosomal_Su5_D2-typ_SF"/>
</dbReference>
<dbReference type="InterPro" id="IPR003029">
    <property type="entry name" value="S1_domain"/>
</dbReference>
<dbReference type="NCBIfam" id="TIGR03591">
    <property type="entry name" value="polynuc_phos"/>
    <property type="match status" value="1"/>
</dbReference>
<dbReference type="NCBIfam" id="NF008805">
    <property type="entry name" value="PRK11824.1"/>
    <property type="match status" value="1"/>
</dbReference>
<dbReference type="PANTHER" id="PTHR11252">
    <property type="entry name" value="POLYRIBONUCLEOTIDE NUCLEOTIDYLTRANSFERASE"/>
    <property type="match status" value="1"/>
</dbReference>
<dbReference type="PANTHER" id="PTHR11252:SF0">
    <property type="entry name" value="POLYRIBONUCLEOTIDE NUCLEOTIDYLTRANSFERASE 1, MITOCHONDRIAL"/>
    <property type="match status" value="1"/>
</dbReference>
<dbReference type="Pfam" id="PF00013">
    <property type="entry name" value="KH_1"/>
    <property type="match status" value="1"/>
</dbReference>
<dbReference type="Pfam" id="PF03726">
    <property type="entry name" value="PNPase"/>
    <property type="match status" value="1"/>
</dbReference>
<dbReference type="Pfam" id="PF01138">
    <property type="entry name" value="RNase_PH"/>
    <property type="match status" value="2"/>
</dbReference>
<dbReference type="Pfam" id="PF03725">
    <property type="entry name" value="RNase_PH_C"/>
    <property type="match status" value="2"/>
</dbReference>
<dbReference type="Pfam" id="PF00575">
    <property type="entry name" value="S1"/>
    <property type="match status" value="1"/>
</dbReference>
<dbReference type="PIRSF" id="PIRSF005499">
    <property type="entry name" value="PNPase"/>
    <property type="match status" value="1"/>
</dbReference>
<dbReference type="SMART" id="SM00322">
    <property type="entry name" value="KH"/>
    <property type="match status" value="1"/>
</dbReference>
<dbReference type="SMART" id="SM00316">
    <property type="entry name" value="S1"/>
    <property type="match status" value="1"/>
</dbReference>
<dbReference type="SUPFAM" id="SSF54791">
    <property type="entry name" value="Eukaryotic type KH-domain (KH-domain type I)"/>
    <property type="match status" value="1"/>
</dbReference>
<dbReference type="SUPFAM" id="SSF50249">
    <property type="entry name" value="Nucleic acid-binding proteins"/>
    <property type="match status" value="1"/>
</dbReference>
<dbReference type="SUPFAM" id="SSF55666">
    <property type="entry name" value="Ribonuclease PH domain 2-like"/>
    <property type="match status" value="2"/>
</dbReference>
<dbReference type="SUPFAM" id="SSF54211">
    <property type="entry name" value="Ribosomal protein S5 domain 2-like"/>
    <property type="match status" value="2"/>
</dbReference>
<dbReference type="PROSITE" id="PS50084">
    <property type="entry name" value="KH_TYPE_1"/>
    <property type="match status" value="1"/>
</dbReference>
<dbReference type="PROSITE" id="PS50126">
    <property type="entry name" value="S1"/>
    <property type="match status" value="1"/>
</dbReference>
<evidence type="ECO:0000255" key="1">
    <source>
        <dbReference type="HAMAP-Rule" id="MF_01595"/>
    </source>
</evidence>